<keyword id="KW-0133">Cell shape</keyword>
<keyword id="KW-0961">Cell wall biogenesis/degradation</keyword>
<keyword id="KW-0460">Magnesium</keyword>
<keyword id="KW-0479">Metal-binding</keyword>
<keyword id="KW-0573">Peptidoglycan synthesis</keyword>
<keyword id="KW-1185">Reference proteome</keyword>
<keyword id="KW-0808">Transferase</keyword>
<gene>
    <name evidence="1" type="primary">uppS</name>
    <name type="ordered locus">XOO1972</name>
</gene>
<reference key="1">
    <citation type="journal article" date="2005" name="Nucleic Acids Res.">
        <title>The genome sequence of Xanthomonas oryzae pathovar oryzae KACC10331, the bacterial blight pathogen of rice.</title>
        <authorList>
            <person name="Lee B.-M."/>
            <person name="Park Y.-J."/>
            <person name="Park D.-S."/>
            <person name="Kang H.-W."/>
            <person name="Kim J.-G."/>
            <person name="Song E.-S."/>
            <person name="Park I.-C."/>
            <person name="Yoon U.-H."/>
            <person name="Hahn J.-H."/>
            <person name="Koo B.-S."/>
            <person name="Lee G.-B."/>
            <person name="Kim H."/>
            <person name="Park H.-S."/>
            <person name="Yoon K.-O."/>
            <person name="Kim J.-H."/>
            <person name="Jung C.-H."/>
            <person name="Koh N.-H."/>
            <person name="Seo J.-S."/>
            <person name="Go S.-J."/>
        </authorList>
    </citation>
    <scope>NUCLEOTIDE SEQUENCE [LARGE SCALE GENOMIC DNA]</scope>
    <source>
        <strain>KACC10331 / KXO85</strain>
    </source>
</reference>
<organism>
    <name type="scientific">Xanthomonas oryzae pv. oryzae (strain KACC10331 / KXO85)</name>
    <dbReference type="NCBI Taxonomy" id="291331"/>
    <lineage>
        <taxon>Bacteria</taxon>
        <taxon>Pseudomonadati</taxon>
        <taxon>Pseudomonadota</taxon>
        <taxon>Gammaproteobacteria</taxon>
        <taxon>Lysobacterales</taxon>
        <taxon>Lysobacteraceae</taxon>
        <taxon>Xanthomonas</taxon>
    </lineage>
</organism>
<evidence type="ECO:0000255" key="1">
    <source>
        <dbReference type="HAMAP-Rule" id="MF_01139"/>
    </source>
</evidence>
<name>UPPS_XANOR</name>
<sequence>MASPAMHPVPPVADVPRHIAIIMDGNGRWAQRRRRPRVIGHRAGARAVNRTIDFCLEKGVSALTLFAFSSENWGRPQDEVDALMKLFLHALDREVGELQRRGVQVRFIGDRSRFAAPLRDRMAGAERSTAANARLVLSIAASYGGRQDIATAARALAEDVAAGRLQPEQIDEALLSSRVALADLPAPDLFIRTGGDTRISNFLLWQLAYTELWFTETLWPEFDAGVMQQALDDYAGRERRFGLTSAQIADKATETSSA</sequence>
<protein>
    <recommendedName>
        <fullName evidence="1">Ditrans,polycis-undecaprenyl-diphosphate synthase ((2E,6E)-farnesyl-diphosphate specific)</fullName>
        <ecNumber evidence="1">2.5.1.31</ecNumber>
    </recommendedName>
    <alternativeName>
        <fullName evidence="1">Ditrans,polycis-undecaprenylcistransferase</fullName>
    </alternativeName>
    <alternativeName>
        <fullName evidence="1">Undecaprenyl diphosphate synthase</fullName>
        <shortName evidence="1">UDS</shortName>
    </alternativeName>
    <alternativeName>
        <fullName evidence="1">Undecaprenyl pyrophosphate synthase</fullName>
        <shortName evidence="1">UPP synthase</shortName>
    </alternativeName>
</protein>
<proteinExistence type="inferred from homology"/>
<comment type="function">
    <text evidence="1">Catalyzes the sequential condensation of isopentenyl diphosphate (IPP) with (2E,6E)-farnesyl diphosphate (E,E-FPP) to yield (2Z,6Z,10Z,14Z,18Z,22Z,26Z,30Z,34E,38E)-undecaprenyl diphosphate (di-trans,octa-cis-UPP). UPP is the precursor of glycosyl carrier lipid in the biosynthesis of bacterial cell wall polysaccharide components such as peptidoglycan and lipopolysaccharide.</text>
</comment>
<comment type="catalytic activity">
    <reaction evidence="1">
        <text>8 isopentenyl diphosphate + (2E,6E)-farnesyl diphosphate = di-trans,octa-cis-undecaprenyl diphosphate + 8 diphosphate</text>
        <dbReference type="Rhea" id="RHEA:27551"/>
        <dbReference type="ChEBI" id="CHEBI:33019"/>
        <dbReference type="ChEBI" id="CHEBI:58405"/>
        <dbReference type="ChEBI" id="CHEBI:128769"/>
        <dbReference type="ChEBI" id="CHEBI:175763"/>
        <dbReference type="EC" id="2.5.1.31"/>
    </reaction>
</comment>
<comment type="cofactor">
    <cofactor evidence="1">
        <name>Mg(2+)</name>
        <dbReference type="ChEBI" id="CHEBI:18420"/>
    </cofactor>
    <text evidence="1">Binds 2 magnesium ions per subunit.</text>
</comment>
<comment type="subunit">
    <text evidence="1">Homodimer.</text>
</comment>
<comment type="similarity">
    <text evidence="1">Belongs to the UPP synthase family.</text>
</comment>
<dbReference type="EC" id="2.5.1.31" evidence="1"/>
<dbReference type="EMBL" id="AE013598">
    <property type="protein sequence ID" value="AAW75226.1"/>
    <property type="molecule type" value="Genomic_DNA"/>
</dbReference>
<dbReference type="SMR" id="Q5H1E5"/>
<dbReference type="STRING" id="291331.XOO1972"/>
<dbReference type="KEGG" id="xoo:XOO1972"/>
<dbReference type="HOGENOM" id="CLU_038505_1_1_6"/>
<dbReference type="Proteomes" id="UP000006735">
    <property type="component" value="Chromosome"/>
</dbReference>
<dbReference type="GO" id="GO:0005829">
    <property type="term" value="C:cytosol"/>
    <property type="evidence" value="ECO:0007669"/>
    <property type="project" value="TreeGrafter"/>
</dbReference>
<dbReference type="GO" id="GO:0008834">
    <property type="term" value="F:ditrans,polycis-undecaprenyl-diphosphate synthase [(2E,6E)-farnesyl-diphosphate specific] activity"/>
    <property type="evidence" value="ECO:0007669"/>
    <property type="project" value="UniProtKB-UniRule"/>
</dbReference>
<dbReference type="GO" id="GO:0000287">
    <property type="term" value="F:magnesium ion binding"/>
    <property type="evidence" value="ECO:0007669"/>
    <property type="project" value="UniProtKB-UniRule"/>
</dbReference>
<dbReference type="GO" id="GO:0071555">
    <property type="term" value="P:cell wall organization"/>
    <property type="evidence" value="ECO:0007669"/>
    <property type="project" value="UniProtKB-KW"/>
</dbReference>
<dbReference type="GO" id="GO:0009252">
    <property type="term" value="P:peptidoglycan biosynthetic process"/>
    <property type="evidence" value="ECO:0007669"/>
    <property type="project" value="UniProtKB-UniRule"/>
</dbReference>
<dbReference type="GO" id="GO:0016094">
    <property type="term" value="P:polyprenol biosynthetic process"/>
    <property type="evidence" value="ECO:0007669"/>
    <property type="project" value="TreeGrafter"/>
</dbReference>
<dbReference type="GO" id="GO:0008360">
    <property type="term" value="P:regulation of cell shape"/>
    <property type="evidence" value="ECO:0007669"/>
    <property type="project" value="UniProtKB-KW"/>
</dbReference>
<dbReference type="CDD" id="cd00475">
    <property type="entry name" value="Cis_IPPS"/>
    <property type="match status" value="1"/>
</dbReference>
<dbReference type="FunFam" id="3.40.1180.10:FF:000001">
    <property type="entry name" value="(2E,6E)-farnesyl-diphosphate-specific ditrans,polycis-undecaprenyl-diphosphate synthase"/>
    <property type="match status" value="1"/>
</dbReference>
<dbReference type="Gene3D" id="3.40.1180.10">
    <property type="entry name" value="Decaprenyl diphosphate synthase-like"/>
    <property type="match status" value="1"/>
</dbReference>
<dbReference type="HAMAP" id="MF_01139">
    <property type="entry name" value="ISPT"/>
    <property type="match status" value="1"/>
</dbReference>
<dbReference type="InterPro" id="IPR001441">
    <property type="entry name" value="UPP_synth-like"/>
</dbReference>
<dbReference type="InterPro" id="IPR018520">
    <property type="entry name" value="UPP_synth-like_CS"/>
</dbReference>
<dbReference type="InterPro" id="IPR036424">
    <property type="entry name" value="UPP_synth-like_sf"/>
</dbReference>
<dbReference type="NCBIfam" id="TIGR00055">
    <property type="entry name" value="uppS"/>
    <property type="match status" value="1"/>
</dbReference>
<dbReference type="PANTHER" id="PTHR10291:SF0">
    <property type="entry name" value="DEHYDRODOLICHYL DIPHOSPHATE SYNTHASE 2"/>
    <property type="match status" value="1"/>
</dbReference>
<dbReference type="PANTHER" id="PTHR10291">
    <property type="entry name" value="DEHYDRODOLICHYL DIPHOSPHATE SYNTHASE FAMILY MEMBER"/>
    <property type="match status" value="1"/>
</dbReference>
<dbReference type="Pfam" id="PF01255">
    <property type="entry name" value="Prenyltransf"/>
    <property type="match status" value="1"/>
</dbReference>
<dbReference type="SUPFAM" id="SSF64005">
    <property type="entry name" value="Undecaprenyl diphosphate synthase"/>
    <property type="match status" value="1"/>
</dbReference>
<dbReference type="PROSITE" id="PS01066">
    <property type="entry name" value="UPP_SYNTHASE"/>
    <property type="match status" value="1"/>
</dbReference>
<feature type="chain" id="PRO_0000123720" description="Ditrans,polycis-undecaprenyl-diphosphate synthase ((2E,6E)-farnesyl-diphosphate specific)">
    <location>
        <begin position="1"/>
        <end position="258"/>
    </location>
</feature>
<feature type="active site" evidence="1">
    <location>
        <position position="24"/>
    </location>
</feature>
<feature type="active site" description="Proton acceptor" evidence="1">
    <location>
        <position position="72"/>
    </location>
</feature>
<feature type="binding site" evidence="1">
    <location>
        <position position="24"/>
    </location>
    <ligand>
        <name>Mg(2+)</name>
        <dbReference type="ChEBI" id="CHEBI:18420"/>
    </ligand>
</feature>
<feature type="binding site" evidence="1">
    <location>
        <begin position="25"/>
        <end position="28"/>
    </location>
    <ligand>
        <name>substrate</name>
    </ligand>
</feature>
<feature type="binding site" evidence="1">
    <location>
        <position position="29"/>
    </location>
    <ligand>
        <name>substrate</name>
    </ligand>
</feature>
<feature type="binding site" evidence="1">
    <location>
        <position position="37"/>
    </location>
    <ligand>
        <name>substrate</name>
    </ligand>
</feature>
<feature type="binding site" evidence="1">
    <location>
        <position position="41"/>
    </location>
    <ligand>
        <name>substrate</name>
    </ligand>
</feature>
<feature type="binding site" evidence="1">
    <location>
        <begin position="69"/>
        <end position="71"/>
    </location>
    <ligand>
        <name>substrate</name>
    </ligand>
</feature>
<feature type="binding site" evidence="1">
    <location>
        <position position="73"/>
    </location>
    <ligand>
        <name>substrate</name>
    </ligand>
</feature>
<feature type="binding site" evidence="1">
    <location>
        <position position="75"/>
    </location>
    <ligand>
        <name>substrate</name>
    </ligand>
</feature>
<feature type="binding site" evidence="1">
    <location>
        <position position="192"/>
    </location>
    <ligand>
        <name>substrate</name>
    </ligand>
</feature>
<feature type="binding site" evidence="1">
    <location>
        <begin position="198"/>
        <end position="200"/>
    </location>
    <ligand>
        <name>substrate</name>
    </ligand>
</feature>
<feature type="binding site" evidence="1">
    <location>
        <position position="211"/>
    </location>
    <ligand>
        <name>Mg(2+)</name>
        <dbReference type="ChEBI" id="CHEBI:18420"/>
    </ligand>
</feature>
<accession>Q5H1E5</accession>